<gene>
    <name type="primary">env</name>
</gene>
<feature type="signal peptide" evidence="2">
    <location>
        <begin position="1"/>
        <end position="24"/>
    </location>
</feature>
<feature type="chain" id="PRO_0000239495" description="Envelope glycoprotein gp160">
    <location>
        <begin position="25"/>
        <end position="851"/>
    </location>
</feature>
<feature type="chain" id="PRO_0000038433" description="Surface protein gp120" evidence="1">
    <location>
        <begin position="25"/>
        <end position="501"/>
    </location>
</feature>
<feature type="chain" id="PRO_0000038434" description="Transmembrane protein gp41" evidence="1">
    <location>
        <begin position="502"/>
        <end position="851"/>
    </location>
</feature>
<feature type="topological domain" description="Extracellular" evidence="2">
    <location>
        <begin position="25"/>
        <end position="669"/>
    </location>
</feature>
<feature type="transmembrane region" description="Helical" evidence="2">
    <location>
        <begin position="670"/>
        <end position="690"/>
    </location>
</feature>
<feature type="topological domain" description="Cytoplasmic" evidence="2">
    <location>
        <begin position="691"/>
        <end position="851"/>
    </location>
</feature>
<feature type="region of interest" description="V1">
    <location>
        <begin position="113"/>
        <end position="153"/>
    </location>
</feature>
<feature type="region of interest" description="V2">
    <location>
        <begin position="154"/>
        <end position="194"/>
    </location>
</feature>
<feature type="region of interest" description="V3">
    <location>
        <begin position="294"/>
        <end position="327"/>
    </location>
</feature>
<feature type="region of interest" description="V4">
    <location>
        <begin position="387"/>
        <end position="410"/>
    </location>
</feature>
<feature type="region of interest" description="V5">
    <location>
        <begin position="453"/>
        <end position="459"/>
    </location>
</feature>
<feature type="region of interest" description="Fusion peptide" evidence="2">
    <location>
        <begin position="502"/>
        <end position="522"/>
    </location>
</feature>
<feature type="region of interest" description="Immunosuppression" evidence="1">
    <location>
        <begin position="565"/>
        <end position="581"/>
    </location>
</feature>
<feature type="region of interest" description="MPER; binding to GalCer" evidence="1">
    <location>
        <begin position="647"/>
        <end position="668"/>
    </location>
</feature>
<feature type="short sequence motif" description="YXXV motif; contains endocytosis signal" evidence="1">
    <location>
        <begin position="697"/>
        <end position="700"/>
    </location>
</feature>
<feature type="short sequence motif" description="Di-leucine internalization motif" evidence="1">
    <location>
        <begin position="850"/>
        <end position="851"/>
    </location>
</feature>
<feature type="site" description="Cleavage; by host furin" evidence="1">
    <location>
        <begin position="501"/>
        <end position="502"/>
    </location>
</feature>
<feature type="lipid moiety-binding region" description="S-palmitoyl cysteine; by host" evidence="1">
    <location>
        <position position="763"/>
    </location>
</feature>
<feature type="glycosylation site" description="N-linked (GlcNAc...) asparagine; by host" evidence="2">
    <location>
        <position position="37"/>
    </location>
</feature>
<feature type="glycosylation site" description="N-linked (GlcNAc...) asparagine; by host" evidence="2">
    <location>
        <position position="70"/>
    </location>
</feature>
<feature type="glycosylation site" description="N-linked (GlcNAc...) asparagine; by host" evidence="2">
    <location>
        <position position="114"/>
    </location>
</feature>
<feature type="glycosylation site" description="N-linked (GlcNAc...) asparagine; by host" evidence="2">
    <location>
        <position position="127"/>
    </location>
</feature>
<feature type="glycosylation site" description="N-linked (GlcNAc...) asparagine; by host" evidence="2">
    <location>
        <position position="134"/>
    </location>
</feature>
<feature type="glycosylation site" description="N-linked (GlcNAc...) asparagine; by host" evidence="2">
    <location>
        <position position="142"/>
    </location>
</feature>
<feature type="glycosylation site" description="N-linked (GlcNAc...) asparagine; by host" evidence="2">
    <location>
        <position position="157"/>
    </location>
</feature>
<feature type="glycosylation site" description="N-linked (GlcNAc...) asparagine; by host" evidence="2">
    <location>
        <position position="184"/>
    </location>
</feature>
<feature type="glycosylation site" description="N-linked (GlcNAc...) asparagine; by host" evidence="2">
    <location>
        <position position="195"/>
    </location>
</feature>
<feature type="glycosylation site" description="N-linked (GlcNAc...) asparagine; by host" evidence="2">
    <location>
        <position position="227"/>
    </location>
</feature>
<feature type="glycosylation site" description="N-linked (GlcNAc...) asparagine; by host" evidence="2">
    <location>
        <position position="230"/>
    </location>
</feature>
<feature type="glycosylation site" description="N-linked (GlcNAc...) asparagine; by host" evidence="2">
    <location>
        <position position="261"/>
    </location>
</feature>
<feature type="glycosylation site" description="N-linked (GlcNAc...) asparagine; by host" evidence="2">
    <location>
        <position position="267"/>
    </location>
</feature>
<feature type="glycosylation site" description="N-linked (GlcNAc...) asparagine; by host" evidence="2">
    <location>
        <position position="278"/>
    </location>
</feature>
<feature type="glycosylation site" description="N-linked (GlcNAc...) asparagine; by host" evidence="2">
    <location>
        <position position="289"/>
    </location>
</feature>
<feature type="glycosylation site" description="N-linked (GlcNAc...) asparagine; by host" evidence="2">
    <location>
        <position position="299"/>
    </location>
</feature>
<feature type="glycosylation site" description="N-linked (GlcNAc...) asparagine; by host" evidence="2">
    <location>
        <position position="355"/>
    </location>
</feature>
<feature type="glycosylation site" description="N-linked (GlcNAc...) asparagine; by host" evidence="2">
    <location>
        <position position="361"/>
    </location>
</feature>
<feature type="glycosylation site" description="N-linked (GlcNAc...) asparagine; by host" evidence="2">
    <location>
        <position position="388"/>
    </location>
</feature>
<feature type="glycosylation site" description="N-linked (GlcNAc...) asparagine; by host" evidence="2">
    <location>
        <position position="398"/>
    </location>
</feature>
<feature type="glycosylation site" description="N-linked (GlcNAc...) asparagine; by host" evidence="2">
    <location>
        <position position="401"/>
    </location>
</feature>
<feature type="glycosylation site" description="N-linked (GlcNAc...) asparagine; by host" evidence="2">
    <location>
        <position position="438"/>
    </location>
</feature>
<feature type="glycosylation site" description="N-linked (GlcNAc...) asparagine; by host" evidence="2">
    <location>
        <position position="453"/>
    </location>
</feature>
<feature type="glycosylation site" description="N-linked (GlcNAc...) asparagine; by host" evidence="2">
    <location>
        <position position="456"/>
    </location>
</feature>
<feature type="glycosylation site" description="N-linked (GlcNAc...) asparagine; by host" evidence="2">
    <location>
        <position position="601"/>
    </location>
</feature>
<feature type="glycosylation site" description="N-linked (GlcNAc...) asparagine; by host" evidence="2">
    <location>
        <position position="610"/>
    </location>
</feature>
<feature type="glycosylation site" description="N-linked (GlcNAc...) asparagine; by host" evidence="2">
    <location>
        <position position="626"/>
    </location>
</feature>
<feature type="disulfide bond" evidence="1">
    <location>
        <begin position="44"/>
        <end position="57"/>
    </location>
</feature>
<feature type="disulfide bond" evidence="1">
    <location>
        <begin position="101"/>
        <end position="203"/>
    </location>
</feature>
<feature type="disulfide bond" evidence="1">
    <location>
        <begin position="108"/>
        <end position="194"/>
    </location>
</feature>
<feature type="disulfide bond" evidence="1">
    <location>
        <begin position="113"/>
        <end position="154"/>
    </location>
</feature>
<feature type="disulfide bond" evidence="1">
    <location>
        <begin position="216"/>
        <end position="246"/>
    </location>
</feature>
<feature type="disulfide bond" evidence="1">
    <location>
        <begin position="226"/>
        <end position="238"/>
    </location>
</feature>
<feature type="disulfide bond" evidence="1">
    <location>
        <begin position="294"/>
        <end position="328"/>
    </location>
</feature>
<feature type="disulfide bond" evidence="1">
    <location>
        <begin position="380"/>
        <end position="437"/>
    </location>
</feature>
<feature type="disulfide bond" evidence="1">
    <location>
        <begin position="387"/>
        <end position="410"/>
    </location>
</feature>
<reference key="1">
    <citation type="journal article" date="1990" name="Nucleic Acids Res.">
        <title>Nucleotide sequence of HIV-2D194, an isolate from a Gambian case of 'neuro-AIDS', which showed excellent growth in macrophages.</title>
        <authorList>
            <person name="Kuehnel H."/>
            <person name="Kreutz R."/>
            <person name="Ruebsamen-Waigmann H."/>
        </authorList>
    </citation>
    <scope>NUCLEOTIDE SEQUENCE [GENOMIC DNA]</scope>
</reference>
<reference key="2">
    <citation type="journal article" date="1989" name="Proc. Natl. Acad. Sci. U.S.A.">
        <title>Molecular cloning of two west African human immunodeficiency virus type 2 isolates that replicate well in macrophages: a Gambian isolate, from a patient with neurologic acquired immunodeficiency syndrome, and a highly divergent Ghanian isolate.</title>
        <authorList>
            <person name="Kuehnel H."/>
            <person name="von Briesen H."/>
            <person name="Dietrich U."/>
            <person name="Adamski M."/>
            <person name="Mix D."/>
            <person name="Biesert L."/>
            <person name="Kreutz R."/>
            <person name="Immelmann A."/>
            <person name="Henco K."/>
            <person name="Meichsner C."/>
            <person name="Andreesen R."/>
            <person name="Gelderblom H."/>
            <person name="Ruebsamen-Waigmann H."/>
        </authorList>
    </citation>
    <scope>NUCLEOTIDE SEQUENCE [GENOMIC DNA] OF 1-266</scope>
</reference>
<reference key="3">
    <citation type="journal article" date="2002" name="J. Gen. Virol.">
        <title>Human immunodeficiency virus type 2.</title>
        <authorList>
            <person name="Reeves J.D."/>
            <person name="Doms R.W."/>
        </authorList>
    </citation>
    <scope>REVIEW</scope>
</reference>
<name>ENV_HV2D1</name>
<keyword id="KW-0014">AIDS</keyword>
<keyword id="KW-0053">Apoptosis</keyword>
<keyword id="KW-1165">Clathrin-mediated endocytosis of virus by host</keyword>
<keyword id="KW-0165">Cleavage on pair of basic residues</keyword>
<keyword id="KW-1015">Disulfide bond</keyword>
<keyword id="KW-1170">Fusion of virus membrane with host endosomal membrane</keyword>
<keyword id="KW-1168">Fusion of virus membrane with host membrane</keyword>
<keyword id="KW-0325">Glycoprotein</keyword>
<keyword id="KW-1032">Host cell membrane</keyword>
<keyword id="KW-1039">Host endosome</keyword>
<keyword id="KW-1043">Host membrane</keyword>
<keyword id="KW-0945">Host-virus interaction</keyword>
<keyword id="KW-1090">Inhibition of host innate immune response by virus</keyword>
<keyword id="KW-1084">Inhibition of host tetherin by virus</keyword>
<keyword id="KW-0449">Lipoprotein</keyword>
<keyword id="KW-0472">Membrane</keyword>
<keyword id="KW-0564">Palmitate</keyword>
<keyword id="KW-0732">Signal</keyword>
<keyword id="KW-0812">Transmembrane</keyword>
<keyword id="KW-1133">Transmembrane helix</keyword>
<keyword id="KW-1161">Viral attachment to host cell</keyword>
<keyword id="KW-0261">Viral envelope protein</keyword>
<keyword id="KW-0899">Viral immunoevasion</keyword>
<keyword id="KW-1162">Viral penetration into host cytoplasm</keyword>
<keyword id="KW-0946">Virion</keyword>
<keyword id="KW-1164">Virus endocytosis by host</keyword>
<keyword id="KW-1160">Virus entry into host cell</keyword>
<accession>P17755</accession>
<comment type="function">
    <text evidence="1">The surface protein gp120 (SU) attaches the virus to the host lymphoid cell by binding to the primary receptor CD4. This interaction induces a structural rearrangement creating a high affinity binding site for a chemokine coreceptor like CXCR4 and/or CCR5. This peculiar 2 stage receptor-interaction strategy allows gp120 to maintain the highly conserved coreceptor-binding site in a cryptic conformation, protected from neutralizing antibodies. Since CD4 also displays a binding site for the disulfide-isomerase P4HB/PDI, a P4HB/PDI-CD4-CXCR4-gp120 complex may form. In that complex, P4HB/PDI could reach and reduce gp120 disulfide bonds, causing major conformational changes in gp120. TXN, another PDI family member could also be involved in disulfide rearrangements in Env during fusion. These changes are transmitted to the transmembrane protein gp41 and are thought to activate its fusogenic potential by unmasking its fusion peptide (By similarity).</text>
</comment>
<comment type="function">
    <text evidence="1">The surface protein gp120 is a ligand for CD209/DC-SIGN and CLEC4M/DC-SIGNR, which are respectively found on dendritic cells (DCs), and on endothelial cells of liver sinusoids and lymph node sinuses. These interactions allow capture of viral particles at mucosal surfaces by these cells and subsequent transmission to permissive cells. DCs are professional antigen presenting cells, critical for host immunity by inducing specific immune responses against a broad variety of pathogens. They act as sentinels in various tissues where they take up antigen, process it, and present it to T-cells following migration to lymphoid organs. HIV subverts the migration properties of dendritic cells to gain access to CD4+ T-cells in lymph nodes. Virus transmission to permissive T-cells occurs either in trans (without DCs infection, through viral capture and transmission), or in cis (following DCs productive infection, through the usual CD4-gp120 interaction), thereby inducing a robust infection. In trans infection, bound virions remain infectious over days and it is proposed that they are not degraded, but protected in non-lysosomal acidic organelles within the DCs close to the cell membrane thus contributing to the viral infectious potential during DCs' migration from the periphery to the lymphoid tissues. On arrival at lymphoid tissues, intact virions recycle back to DCs' cell surface allowing virus transmission to CD4+ T-cells. Virion capture also seems to lead to MHC-II-restricted viral antigen presentation, and probably to the activation of HIV-specific CD4+ cells (By similarity).</text>
</comment>
<comment type="function">
    <text evidence="1">The transmembrane protein gp41 (TM) acts as a class I viral fusion protein. Under the current model, the protein has at least 3 conformational states: pre-fusion native state, pre-hairpin intermediate state, and post-fusion hairpin state. During fusion of viral and target intracellular membranes, the coiled coil regions (heptad repeats) assume a trimer-of-hairpins structure, positioning the fusion peptide in close proximity to the C-terminal region of the ectodomain. The formation of this structure appears to drive apposition and subsequent fusion of viral and target cell membranes. Complete fusion occurs in host cell endosomes and is dynamin-dependent, however some lipid transfer might occur at the plasma membrane. The virus undergoes clathrin-dependent internalization long before endosomal fusion, thus minimizing the surface exposure of conserved viral epitopes during fusion and reducing the efficacy of inhibitors targeting these epitopes. Membranes fusion leads to delivery of the nucleocapsid into the cytoplasm (By similarity).</text>
</comment>
<comment type="function">
    <text evidence="1">The envelope glycoprotein gp160 precursor down-modulates cell surface CD4 antigen by interacting with it in the endoplasmic reticulum and blocking its transport to the cell surface.</text>
</comment>
<comment type="function">
    <text evidence="1">The gp120-gp41 heterodimer seems to contribute to T-cell depletion during HIV-1 infection. The envelope glycoproteins expressed on the surface of infected cells induce apoptosis through an interaction with uninfected cells expressing the receptor (CD4) and the coreceptors CXCR4 or CCR5. This type of bystander killing may be obtained by at least three distinct mechanisms. First, the interaction between the 2 cells can induce cellular fusion followed by nuclear fusion within the syncytium. Syncytia are condemned to die from apoptosis. Second, the 2 interacting cells may not fuse entirely and simply exchange plasma membrane lipids, after a sort of hemifusion process, followed by rapid death. Third, it is possible that virus-infected cells, on the point of undergoing apoptosis, fuse with CD4-expressing cells, in which case apoptosis is rapidly transmitted from one cell to the other and thus occurs in a sort of contagious fashion (By similarity).</text>
</comment>
<comment type="function">
    <text evidence="1">The gp120-gp41 heterodimer allows rapid transcytosis of the virus through CD4 negative cells such as simple epithelial monolayers of the intestinal, rectal and endocervical epithelial barriers. Both gp120 and gp41 specifically recognize glycosphingolipids galactosyl-ceramide (GalCer) or 3' sulfo-galactosyl-ceramide (GalS) present in the lipid rafts structures of epithelial cells. Binding to these alternative receptors allows the rapid transcytosis of the virus through the epithelial cells. This transcytotic vesicle-mediated transport of virions from the apical side to the basolateral side of the epithelial cells does not involve infection of the cells themselves (By similarity).</text>
</comment>
<comment type="subunit">
    <molecule>Surface protein gp120</molecule>
    <text evidence="1">The mature envelope protein (Env) consists of a homotrimer of non-covalently associated gp120-gp41 heterodimers. The resulting complex protrudes from the virus surface as a spike. There seems to be as few as 10 spikes on the average virion. Interacts with human CD4, CCR5 and CXCR4, to form a P4HB/PDI-CD4-CXCR4-gp120 complex. Gp120 also interacts with the C-type lectins CD209/DC-SIGN and CLEC4M/DC-SIGNR (collectively referred to as DC-SIGN(R)). Gp120 and gp41 interact with GalCer (By similarity).</text>
</comment>
<comment type="subunit">
    <molecule>Transmembrane protein gp41</molecule>
    <text evidence="1">The mature envelope protein (Env) consists of a homotrimer of non-covalently associated gp120-gp41 heterodimers. The resulting complex protrudes from the virus surface as a spike. There seems to be as few as 10 spikes on the average virion.</text>
</comment>
<comment type="subcellular location">
    <molecule>Transmembrane protein gp41</molecule>
    <subcellularLocation>
        <location evidence="1">Virion membrane</location>
        <topology evidence="1">Single-pass type I membrane protein</topology>
    </subcellularLocation>
    <subcellularLocation>
        <location evidence="1">Host cell membrane</location>
        <topology evidence="1">Single-pass type I membrane protein</topology>
    </subcellularLocation>
    <subcellularLocation>
        <location evidence="3">Host endosome membrane</location>
        <topology evidence="3">Single-pass type I membrane protein</topology>
    </subcellularLocation>
    <text evidence="1">It is probably concentrated at the site of budding and incorporated into the virions possibly by contacts between the cytoplasmic tail of Env and the N-terminus of Gag.</text>
</comment>
<comment type="subcellular location">
    <molecule>Surface protein gp120</molecule>
    <subcellularLocation>
        <location evidence="1">Virion membrane</location>
        <topology evidence="1">Peripheral membrane protein</topology>
    </subcellularLocation>
    <subcellularLocation>
        <location evidence="1">Host cell membrane</location>
        <topology evidence="1">Peripheral membrane protein</topology>
    </subcellularLocation>
    <subcellularLocation>
        <location evidence="3">Host endosome membrane</location>
        <topology evidence="3">Peripheral membrane protein</topology>
    </subcellularLocation>
    <text evidence="1">The surface protein is not anchored to the viral envelope, but associates with the extravirion surface through its binding to TM. It is probably concentrated at the site of budding and incorporated into the virions possibly by contacts between the cytoplasmic tail of Env and the N-terminus of Gag (By similarity).</text>
</comment>
<comment type="domain">
    <text evidence="1">Some of the most genetically diverse regions of the viral genome are present in Env. They are called variable regions 1 through 5 (V1 through V5). Coreceptor usage of gp120 is determined mainly by the primary structure of the third variable region (V3) in the outer domain of gp120. Binding to CCR5 involves a region adjacent in addition to V3 (By similarity).</text>
</comment>
<comment type="domain">
    <text evidence="1">The 17 amino acids long immunosuppressive region is present in many retroviral envelope proteins. Synthetic peptides derived from this relatively conserved sequence inhibit immune function in vitro and in vivo (By similarity).</text>
</comment>
<comment type="PTM">
    <text evidence="1">Specific enzymatic cleavages in vivo yield mature proteins. Envelope glycoproteins are synthesized as an inactive precursor that is heavily N-glycosylated and processed likely by host cell furin in the Golgi to yield the mature SU and TM proteins. The cleavage site between SU and TM requires the minimal sequence [KR]-X-[KR]-R (By similarity).</text>
</comment>
<comment type="PTM">
    <text evidence="1">Palmitoylation of the transmembrane protein and of Env polyprotein (prior to its proteolytic cleavage) is essential for their association with host cell membrane lipid rafts. Palmitoylation is therefore required for envelope trafficking to classical lipid rafts, but not for viral replication (By similarity).</text>
</comment>
<comment type="miscellaneous">
    <text>Some HIV-2 isolates have been described that can infect cells independently of CD4, using CXCR4 as primary receptor. These isolates may have an exposed coreceptor binding site.</text>
</comment>
<comment type="miscellaneous">
    <text>This isolate is from a Gambian case of 'neuro-AIDS'.</text>
</comment>
<proteinExistence type="inferred from homology"/>
<organism>
    <name type="scientific">Human immunodeficiency virus type 2 subtype A (isolate D194)</name>
    <name type="common">HIV-2</name>
    <dbReference type="NCBI Taxonomy" id="11713"/>
    <lineage>
        <taxon>Viruses</taxon>
        <taxon>Riboviria</taxon>
        <taxon>Pararnavirae</taxon>
        <taxon>Artverviricota</taxon>
        <taxon>Revtraviricetes</taxon>
        <taxon>Ortervirales</taxon>
        <taxon>Retroviridae</taxon>
        <taxon>Orthoretrovirinae</taxon>
        <taxon>Lentivirus</taxon>
        <taxon>Human immunodeficiency virus 2</taxon>
    </lineage>
</organism>
<evidence type="ECO:0000250" key="1"/>
<evidence type="ECO:0000255" key="2"/>
<evidence type="ECO:0000305" key="3"/>
<dbReference type="EMBL" id="J04542">
    <property type="protein sequence ID" value="AAA76847.1"/>
    <property type="molecule type" value="Genomic_DNA"/>
</dbReference>
<dbReference type="EMBL" id="X52223">
    <property type="protein sequence ID" value="CAA36471.1"/>
    <property type="molecule type" value="Genomic_DNA"/>
</dbReference>
<dbReference type="PIR" id="S12159">
    <property type="entry name" value="S12159"/>
</dbReference>
<dbReference type="SMR" id="P17755"/>
<dbReference type="GlyCosmos" id="P17755">
    <property type="glycosylation" value="27 sites, No reported glycans"/>
</dbReference>
<dbReference type="Proteomes" id="UP000007422">
    <property type="component" value="Segment"/>
</dbReference>
<dbReference type="GO" id="GO:0044175">
    <property type="term" value="C:host cell endosome membrane"/>
    <property type="evidence" value="ECO:0007669"/>
    <property type="project" value="UniProtKB-SubCell"/>
</dbReference>
<dbReference type="GO" id="GO:0020002">
    <property type="term" value="C:host cell plasma membrane"/>
    <property type="evidence" value="ECO:0007669"/>
    <property type="project" value="UniProtKB-SubCell"/>
</dbReference>
<dbReference type="GO" id="GO:0016020">
    <property type="term" value="C:membrane"/>
    <property type="evidence" value="ECO:0007669"/>
    <property type="project" value="UniProtKB-KW"/>
</dbReference>
<dbReference type="GO" id="GO:0019031">
    <property type="term" value="C:viral envelope"/>
    <property type="evidence" value="ECO:0007669"/>
    <property type="project" value="UniProtKB-KW"/>
</dbReference>
<dbReference type="GO" id="GO:0055036">
    <property type="term" value="C:virion membrane"/>
    <property type="evidence" value="ECO:0007669"/>
    <property type="project" value="UniProtKB-SubCell"/>
</dbReference>
<dbReference type="GO" id="GO:0005198">
    <property type="term" value="F:structural molecule activity"/>
    <property type="evidence" value="ECO:0007669"/>
    <property type="project" value="InterPro"/>
</dbReference>
<dbReference type="GO" id="GO:0075512">
    <property type="term" value="P:clathrin-dependent endocytosis of virus by host cell"/>
    <property type="evidence" value="ECO:0007669"/>
    <property type="project" value="UniProtKB-KW"/>
</dbReference>
<dbReference type="GO" id="GO:0039654">
    <property type="term" value="P:fusion of virus membrane with host endosome membrane"/>
    <property type="evidence" value="ECO:0007669"/>
    <property type="project" value="UniProtKB-KW"/>
</dbReference>
<dbReference type="GO" id="GO:0052170">
    <property type="term" value="P:symbiont-mediated suppression of host innate immune response"/>
    <property type="evidence" value="ECO:0007669"/>
    <property type="project" value="UniProtKB-KW"/>
</dbReference>
<dbReference type="GO" id="GO:0039587">
    <property type="term" value="P:symbiont-mediated-mediated suppression of host tetherin activity"/>
    <property type="evidence" value="ECO:0007669"/>
    <property type="project" value="UniProtKB-KW"/>
</dbReference>
<dbReference type="GO" id="GO:0019062">
    <property type="term" value="P:virion attachment to host cell"/>
    <property type="evidence" value="ECO:0007669"/>
    <property type="project" value="UniProtKB-KW"/>
</dbReference>
<dbReference type="CDD" id="cd09909">
    <property type="entry name" value="HIV-1-like_HR1-HR2"/>
    <property type="match status" value="1"/>
</dbReference>
<dbReference type="Gene3D" id="1.10.287.210">
    <property type="match status" value="1"/>
</dbReference>
<dbReference type="Gene3D" id="2.170.40.20">
    <property type="entry name" value="Human immunodeficiency virus 1, Gp160, envelope glycoprotein"/>
    <property type="match status" value="2"/>
</dbReference>
<dbReference type="InterPro" id="IPR036377">
    <property type="entry name" value="Gp120_core_sf"/>
</dbReference>
<dbReference type="InterPro" id="IPR000328">
    <property type="entry name" value="GP41-like"/>
</dbReference>
<dbReference type="InterPro" id="IPR000777">
    <property type="entry name" value="HIV1_Gp120"/>
</dbReference>
<dbReference type="Pfam" id="PF00516">
    <property type="entry name" value="GP120"/>
    <property type="match status" value="1"/>
</dbReference>
<dbReference type="Pfam" id="PF00517">
    <property type="entry name" value="GP41"/>
    <property type="match status" value="1"/>
</dbReference>
<dbReference type="SUPFAM" id="SSF56502">
    <property type="entry name" value="gp120 core"/>
    <property type="match status" value="1"/>
</dbReference>
<dbReference type="SUPFAM" id="SSF58069">
    <property type="entry name" value="Virus ectodomain"/>
    <property type="match status" value="1"/>
</dbReference>
<sequence length="851" mass="97179">MEPGRNQLLVAILLTSACLIYCKQYVTVFYGIPAWRNASIPLFCATKNRDTWGTIQCLPDNDDYQEITLNVTEAFDAWDNTVTEQAIEDVWRLFETSIKPCVKLTPLCVAMNCNITSGTTATPSPPNITIIDENSTCIGDNNCTGLGKEEVVECEFNMTGLEQDKKRKYNDAWYSRDVVCDKTNGTGTCYMRHCNTSVIKESCDKHYWDAMKFRYCAPPGFALLRCNDTNYSGFEPKCSKVVAASCTRMMETQTSTWFGFNGTRAENRTYIYWHGKDNRTIISLNKYYNLTMHCKRPGNKTVVPITLMSGRRFHSRPVYNKKPGQAWCWFQGNWIEAMREVKQTLAKHPRYGGTNDTGKINFTKPGIGSDPEVTYMWTNCRGEFLYCNMTWFLNWVENKTNQTHGNYAPCHIRQIINTWHKVGTNVYLPPREGELTCNSTVTSIIANIDSDGNQTNITFSAEVAELYRLELGDYKLIEVTPIPFAPTKEKRYSSAPVRNKRGVFVLGFLGFLATAGSAMGGASLTLSAQSRTLLAGIVQQQQQLLDVVKRQQEMLRLTVWGTKNLQARVTAIEKYLKDQAQLNSWGCAFRQVCHTTVPWVNDSLTPDWNNMTWQEWEKRVHYLEANISQSLEQAQIQQEKNMYELQKLNSWDVFGNWFDLTSWIKYIQYGVYIVVGIIGLRIAIYIVQLLSRLRKGYRPVFSSPPGYLQQIHIHTDRGQPANEETEEDAGDDSGFGLWPWPLNYIQFLIHLLTRLLTGLYNSCRGLLSKNSPTRRLISQSLTAIRDWLRLKAAYLQYGCEWIQEAFRAFARTARETIAGAWRGLCEAAQRIGRGILAVPRRIRQGAEIALL</sequence>
<protein>
    <recommendedName>
        <fullName>Envelope glycoprotein gp160</fullName>
    </recommendedName>
    <alternativeName>
        <fullName>Env polyprotein</fullName>
    </alternativeName>
    <component>
        <recommendedName>
            <fullName>Surface protein gp120</fullName>
            <shortName>SU</shortName>
        </recommendedName>
        <alternativeName>
            <fullName>Glycoprotein 120</fullName>
            <shortName>gp120</shortName>
        </alternativeName>
    </component>
    <component>
        <recommendedName>
            <fullName>Transmembrane protein gp41</fullName>
            <shortName>TM</shortName>
        </recommendedName>
        <alternativeName>
            <fullName>Glycoprotein 41</fullName>
            <shortName>gp41</shortName>
        </alternativeName>
    </component>
</protein>
<organismHost>
    <name type="scientific">Homo sapiens</name>
    <name type="common">Human</name>
    <dbReference type="NCBI Taxonomy" id="9606"/>
</organismHost>